<sequence>MKNIGININTDKDISRNILDKIFQYIHEECSEAKIKVFYDSKGLDNEESRALDAVMVLGGDGTILGTARALAKYDVPIFGINRGHLGFLAEIELEDCKKAIKNLFKGQYKIEDRIMLKCDLKGIDKKDDFLALNDIVLTKGNLSRIVKYSIYVDDVWYTTFVADGVIVATPTGSTAYSLSAGGPIVYPDLDVLEIAPICPHSLGIRPILLNGNSKINIRVLKKYEDPVLTIDGQRYKKVTVNEVTISKSEYKCRLIKFKDKDYFKILRTKISYRSRECEGE</sequence>
<accession>A7FUT5</accession>
<gene>
    <name evidence="1" type="primary">nadK</name>
    <name type="ordered locus">CLB_1816</name>
</gene>
<reference key="1">
    <citation type="journal article" date="2007" name="PLoS ONE">
        <title>Analysis of the neurotoxin complex genes in Clostridium botulinum A1-A4 and B1 strains: BoNT/A3, /Ba4 and /B1 clusters are located within plasmids.</title>
        <authorList>
            <person name="Smith T.J."/>
            <person name="Hill K.K."/>
            <person name="Foley B.T."/>
            <person name="Detter J.C."/>
            <person name="Munk A.C."/>
            <person name="Bruce D.C."/>
            <person name="Doggett N.A."/>
            <person name="Smith L.A."/>
            <person name="Marks J.D."/>
            <person name="Xie G."/>
            <person name="Brettin T.S."/>
        </authorList>
    </citation>
    <scope>NUCLEOTIDE SEQUENCE [LARGE SCALE GENOMIC DNA]</scope>
    <source>
        <strain>ATCC 19397 / Type A</strain>
    </source>
</reference>
<protein>
    <recommendedName>
        <fullName evidence="1">NAD kinase</fullName>
        <ecNumber evidence="1">2.7.1.23</ecNumber>
    </recommendedName>
    <alternativeName>
        <fullName evidence="1">ATP-dependent NAD kinase</fullName>
    </alternativeName>
</protein>
<comment type="function">
    <text evidence="1">Involved in the regulation of the intracellular balance of NAD and NADP, and is a key enzyme in the biosynthesis of NADP. Catalyzes specifically the phosphorylation on 2'-hydroxyl of the adenosine moiety of NAD to yield NADP.</text>
</comment>
<comment type="catalytic activity">
    <reaction evidence="1">
        <text>NAD(+) + ATP = ADP + NADP(+) + H(+)</text>
        <dbReference type="Rhea" id="RHEA:18629"/>
        <dbReference type="ChEBI" id="CHEBI:15378"/>
        <dbReference type="ChEBI" id="CHEBI:30616"/>
        <dbReference type="ChEBI" id="CHEBI:57540"/>
        <dbReference type="ChEBI" id="CHEBI:58349"/>
        <dbReference type="ChEBI" id="CHEBI:456216"/>
        <dbReference type="EC" id="2.7.1.23"/>
    </reaction>
</comment>
<comment type="cofactor">
    <cofactor evidence="1">
        <name>a divalent metal cation</name>
        <dbReference type="ChEBI" id="CHEBI:60240"/>
    </cofactor>
</comment>
<comment type="subcellular location">
    <subcellularLocation>
        <location evidence="1">Cytoplasm</location>
    </subcellularLocation>
</comment>
<comment type="similarity">
    <text evidence="1">Belongs to the NAD kinase family.</text>
</comment>
<feature type="chain" id="PRO_1000120843" description="NAD kinase">
    <location>
        <begin position="1"/>
        <end position="281"/>
    </location>
</feature>
<feature type="active site" description="Proton acceptor" evidence="1">
    <location>
        <position position="61"/>
    </location>
</feature>
<feature type="binding site" evidence="1">
    <location>
        <begin position="61"/>
        <end position="62"/>
    </location>
    <ligand>
        <name>NAD(+)</name>
        <dbReference type="ChEBI" id="CHEBI:57540"/>
    </ligand>
</feature>
<feature type="binding site" evidence="1">
    <location>
        <begin position="134"/>
        <end position="135"/>
    </location>
    <ligand>
        <name>NAD(+)</name>
        <dbReference type="ChEBI" id="CHEBI:57540"/>
    </ligand>
</feature>
<feature type="binding site" evidence="1">
    <location>
        <position position="145"/>
    </location>
    <ligand>
        <name>NAD(+)</name>
        <dbReference type="ChEBI" id="CHEBI:57540"/>
    </ligand>
</feature>
<feature type="binding site" evidence="1">
    <location>
        <position position="164"/>
    </location>
    <ligand>
        <name>NAD(+)</name>
        <dbReference type="ChEBI" id="CHEBI:57540"/>
    </ligand>
</feature>
<feature type="binding site" evidence="1">
    <location>
        <begin position="175"/>
        <end position="180"/>
    </location>
    <ligand>
        <name>NAD(+)</name>
        <dbReference type="ChEBI" id="CHEBI:57540"/>
    </ligand>
</feature>
<feature type="binding site" evidence="1">
    <location>
        <position position="234"/>
    </location>
    <ligand>
        <name>NAD(+)</name>
        <dbReference type="ChEBI" id="CHEBI:57540"/>
    </ligand>
</feature>
<dbReference type="EC" id="2.7.1.23" evidence="1"/>
<dbReference type="EMBL" id="CP000726">
    <property type="protein sequence ID" value="ABS32452.1"/>
    <property type="molecule type" value="Genomic_DNA"/>
</dbReference>
<dbReference type="RefSeq" id="WP_011986440.1">
    <property type="nucleotide sequence ID" value="NC_009697.1"/>
</dbReference>
<dbReference type="SMR" id="A7FUT5"/>
<dbReference type="KEGG" id="cba:CLB_1816"/>
<dbReference type="HOGENOM" id="CLU_008831_0_1_9"/>
<dbReference type="GO" id="GO:0005737">
    <property type="term" value="C:cytoplasm"/>
    <property type="evidence" value="ECO:0007669"/>
    <property type="project" value="UniProtKB-SubCell"/>
</dbReference>
<dbReference type="GO" id="GO:0005524">
    <property type="term" value="F:ATP binding"/>
    <property type="evidence" value="ECO:0007669"/>
    <property type="project" value="UniProtKB-KW"/>
</dbReference>
<dbReference type="GO" id="GO:0046872">
    <property type="term" value="F:metal ion binding"/>
    <property type="evidence" value="ECO:0007669"/>
    <property type="project" value="UniProtKB-UniRule"/>
</dbReference>
<dbReference type="GO" id="GO:0051287">
    <property type="term" value="F:NAD binding"/>
    <property type="evidence" value="ECO:0007669"/>
    <property type="project" value="UniProtKB-ARBA"/>
</dbReference>
<dbReference type="GO" id="GO:0003951">
    <property type="term" value="F:NAD+ kinase activity"/>
    <property type="evidence" value="ECO:0007669"/>
    <property type="project" value="UniProtKB-UniRule"/>
</dbReference>
<dbReference type="GO" id="GO:0019674">
    <property type="term" value="P:NAD metabolic process"/>
    <property type="evidence" value="ECO:0007669"/>
    <property type="project" value="InterPro"/>
</dbReference>
<dbReference type="GO" id="GO:0006741">
    <property type="term" value="P:NADP biosynthetic process"/>
    <property type="evidence" value="ECO:0007669"/>
    <property type="project" value="UniProtKB-UniRule"/>
</dbReference>
<dbReference type="FunFam" id="2.60.200.30:FF:000011">
    <property type="entry name" value="NAD kinase"/>
    <property type="match status" value="1"/>
</dbReference>
<dbReference type="Gene3D" id="3.40.50.10330">
    <property type="entry name" value="Probable inorganic polyphosphate/atp-NAD kinase, domain 1"/>
    <property type="match status" value="1"/>
</dbReference>
<dbReference type="Gene3D" id="2.60.200.30">
    <property type="entry name" value="Probable inorganic polyphosphate/atp-NAD kinase, domain 2"/>
    <property type="match status" value="1"/>
</dbReference>
<dbReference type="HAMAP" id="MF_00361">
    <property type="entry name" value="NAD_kinase"/>
    <property type="match status" value="1"/>
</dbReference>
<dbReference type="InterPro" id="IPR017438">
    <property type="entry name" value="ATP-NAD_kinase_N"/>
</dbReference>
<dbReference type="InterPro" id="IPR017437">
    <property type="entry name" value="ATP-NAD_kinase_PpnK-typ_C"/>
</dbReference>
<dbReference type="InterPro" id="IPR016064">
    <property type="entry name" value="NAD/diacylglycerol_kinase_sf"/>
</dbReference>
<dbReference type="InterPro" id="IPR002504">
    <property type="entry name" value="NADK"/>
</dbReference>
<dbReference type="PANTHER" id="PTHR20275">
    <property type="entry name" value="NAD KINASE"/>
    <property type="match status" value="1"/>
</dbReference>
<dbReference type="PANTHER" id="PTHR20275:SF0">
    <property type="entry name" value="NAD KINASE"/>
    <property type="match status" value="1"/>
</dbReference>
<dbReference type="Pfam" id="PF01513">
    <property type="entry name" value="NAD_kinase"/>
    <property type="match status" value="1"/>
</dbReference>
<dbReference type="Pfam" id="PF20143">
    <property type="entry name" value="NAD_kinase_C"/>
    <property type="match status" value="1"/>
</dbReference>
<dbReference type="SUPFAM" id="SSF111331">
    <property type="entry name" value="NAD kinase/diacylglycerol kinase-like"/>
    <property type="match status" value="1"/>
</dbReference>
<evidence type="ECO:0000255" key="1">
    <source>
        <dbReference type="HAMAP-Rule" id="MF_00361"/>
    </source>
</evidence>
<proteinExistence type="inferred from homology"/>
<keyword id="KW-0067">ATP-binding</keyword>
<keyword id="KW-0963">Cytoplasm</keyword>
<keyword id="KW-0418">Kinase</keyword>
<keyword id="KW-0520">NAD</keyword>
<keyword id="KW-0521">NADP</keyword>
<keyword id="KW-0547">Nucleotide-binding</keyword>
<keyword id="KW-0808">Transferase</keyword>
<organism>
    <name type="scientific">Clostridium botulinum (strain ATCC 19397 / Type A)</name>
    <dbReference type="NCBI Taxonomy" id="441770"/>
    <lineage>
        <taxon>Bacteria</taxon>
        <taxon>Bacillati</taxon>
        <taxon>Bacillota</taxon>
        <taxon>Clostridia</taxon>
        <taxon>Eubacteriales</taxon>
        <taxon>Clostridiaceae</taxon>
        <taxon>Clostridium</taxon>
    </lineage>
</organism>
<name>NADK_CLOB1</name>